<keyword id="KW-0687">Ribonucleoprotein</keyword>
<keyword id="KW-0689">Ribosomal protein</keyword>
<keyword id="KW-0694">RNA-binding</keyword>
<keyword id="KW-0699">rRNA-binding</keyword>
<keyword id="KW-0820">tRNA-binding</keyword>
<evidence type="ECO:0000255" key="1">
    <source>
        <dbReference type="HAMAP-Rule" id="MF_01342"/>
    </source>
</evidence>
<evidence type="ECO:0000305" key="2"/>
<reference key="1">
    <citation type="journal article" date="2002" name="Proc. Natl. Acad. Sci. U.S.A.">
        <title>The genome sequence of the facultative intracellular pathogen Brucella melitensis.</title>
        <authorList>
            <person name="DelVecchio V.G."/>
            <person name="Kapatral V."/>
            <person name="Redkar R.J."/>
            <person name="Patra G."/>
            <person name="Mujer C."/>
            <person name="Los T."/>
            <person name="Ivanova N."/>
            <person name="Anderson I."/>
            <person name="Bhattacharyya A."/>
            <person name="Lykidis A."/>
            <person name="Reznik G."/>
            <person name="Jablonski L."/>
            <person name="Larsen N."/>
            <person name="D'Souza M."/>
            <person name="Bernal A."/>
            <person name="Mazur M."/>
            <person name="Goltsman E."/>
            <person name="Selkov E."/>
            <person name="Elzer P.H."/>
            <person name="Hagius S."/>
            <person name="O'Callaghan D."/>
            <person name="Letesson J.-J."/>
            <person name="Haselkorn R."/>
            <person name="Kyrpides N.C."/>
            <person name="Overbeek R."/>
        </authorList>
    </citation>
    <scope>NUCLEOTIDE SEQUENCE [LARGE SCALE GENOMIC DNA]</scope>
    <source>
        <strain>ATCC 23456 / CCUG 17765 / NCTC 10094 / 16M</strain>
    </source>
</reference>
<feature type="chain" id="PRO_0000062062" description="Large ribosomal subunit protein uL16">
    <location>
        <begin position="1"/>
        <end position="137"/>
    </location>
</feature>
<accession>Q8YHN3</accession>
<name>RL16_BRUME</name>
<dbReference type="EMBL" id="AE008917">
    <property type="protein sequence ID" value="AAL51945.1"/>
    <property type="molecule type" value="Genomic_DNA"/>
</dbReference>
<dbReference type="PIR" id="AF3347">
    <property type="entry name" value="AF3347"/>
</dbReference>
<dbReference type="RefSeq" id="WP_002964355.1">
    <property type="nucleotide sequence ID" value="NZ_GG703780.1"/>
</dbReference>
<dbReference type="SMR" id="Q8YHN3"/>
<dbReference type="GeneID" id="97533531"/>
<dbReference type="KEGG" id="bme:BMEI0764"/>
<dbReference type="KEGG" id="bmel:DK63_658"/>
<dbReference type="PATRIC" id="fig|224914.52.peg.689"/>
<dbReference type="eggNOG" id="COG0197">
    <property type="taxonomic scope" value="Bacteria"/>
</dbReference>
<dbReference type="PhylomeDB" id="Q8YHN3"/>
<dbReference type="Proteomes" id="UP000000419">
    <property type="component" value="Chromosome I"/>
</dbReference>
<dbReference type="GO" id="GO:0022625">
    <property type="term" value="C:cytosolic large ribosomal subunit"/>
    <property type="evidence" value="ECO:0007669"/>
    <property type="project" value="TreeGrafter"/>
</dbReference>
<dbReference type="GO" id="GO:0019843">
    <property type="term" value="F:rRNA binding"/>
    <property type="evidence" value="ECO:0007669"/>
    <property type="project" value="UniProtKB-UniRule"/>
</dbReference>
<dbReference type="GO" id="GO:0003735">
    <property type="term" value="F:structural constituent of ribosome"/>
    <property type="evidence" value="ECO:0007669"/>
    <property type="project" value="InterPro"/>
</dbReference>
<dbReference type="GO" id="GO:0000049">
    <property type="term" value="F:tRNA binding"/>
    <property type="evidence" value="ECO:0007669"/>
    <property type="project" value="UniProtKB-KW"/>
</dbReference>
<dbReference type="GO" id="GO:0006412">
    <property type="term" value="P:translation"/>
    <property type="evidence" value="ECO:0007669"/>
    <property type="project" value="UniProtKB-UniRule"/>
</dbReference>
<dbReference type="CDD" id="cd01433">
    <property type="entry name" value="Ribosomal_L16_L10e"/>
    <property type="match status" value="1"/>
</dbReference>
<dbReference type="FunFam" id="3.90.1170.10:FF:000001">
    <property type="entry name" value="50S ribosomal protein L16"/>
    <property type="match status" value="1"/>
</dbReference>
<dbReference type="Gene3D" id="3.90.1170.10">
    <property type="entry name" value="Ribosomal protein L10e/L16"/>
    <property type="match status" value="1"/>
</dbReference>
<dbReference type="HAMAP" id="MF_01342">
    <property type="entry name" value="Ribosomal_uL16"/>
    <property type="match status" value="1"/>
</dbReference>
<dbReference type="InterPro" id="IPR047873">
    <property type="entry name" value="Ribosomal_uL16"/>
</dbReference>
<dbReference type="InterPro" id="IPR000114">
    <property type="entry name" value="Ribosomal_uL16_bact-type"/>
</dbReference>
<dbReference type="InterPro" id="IPR020798">
    <property type="entry name" value="Ribosomal_uL16_CS"/>
</dbReference>
<dbReference type="InterPro" id="IPR016180">
    <property type="entry name" value="Ribosomal_uL16_dom"/>
</dbReference>
<dbReference type="InterPro" id="IPR036920">
    <property type="entry name" value="Ribosomal_uL16_sf"/>
</dbReference>
<dbReference type="NCBIfam" id="TIGR01164">
    <property type="entry name" value="rplP_bact"/>
    <property type="match status" value="1"/>
</dbReference>
<dbReference type="PANTHER" id="PTHR12220">
    <property type="entry name" value="50S/60S RIBOSOMAL PROTEIN L16"/>
    <property type="match status" value="1"/>
</dbReference>
<dbReference type="PANTHER" id="PTHR12220:SF13">
    <property type="entry name" value="LARGE RIBOSOMAL SUBUNIT PROTEIN UL16M"/>
    <property type="match status" value="1"/>
</dbReference>
<dbReference type="Pfam" id="PF00252">
    <property type="entry name" value="Ribosomal_L16"/>
    <property type="match status" value="1"/>
</dbReference>
<dbReference type="PRINTS" id="PR00060">
    <property type="entry name" value="RIBOSOMALL16"/>
</dbReference>
<dbReference type="SUPFAM" id="SSF54686">
    <property type="entry name" value="Ribosomal protein L16p/L10e"/>
    <property type="match status" value="1"/>
</dbReference>
<dbReference type="PROSITE" id="PS00586">
    <property type="entry name" value="RIBOSOMAL_L16_1"/>
    <property type="match status" value="1"/>
</dbReference>
<dbReference type="PROSITE" id="PS00701">
    <property type="entry name" value="RIBOSOMAL_L16_2"/>
    <property type="match status" value="1"/>
</dbReference>
<proteinExistence type="inferred from homology"/>
<gene>
    <name evidence="1" type="primary">rplP</name>
    <name type="ordered locus">BMEI0764</name>
</gene>
<organism>
    <name type="scientific">Brucella melitensis biotype 1 (strain ATCC 23456 / CCUG 17765 / NCTC 10094 / 16M)</name>
    <dbReference type="NCBI Taxonomy" id="224914"/>
    <lineage>
        <taxon>Bacteria</taxon>
        <taxon>Pseudomonadati</taxon>
        <taxon>Pseudomonadota</taxon>
        <taxon>Alphaproteobacteria</taxon>
        <taxon>Hyphomicrobiales</taxon>
        <taxon>Brucellaceae</taxon>
        <taxon>Brucella/Ochrobactrum group</taxon>
        <taxon>Brucella</taxon>
    </lineage>
</organism>
<comment type="function">
    <text evidence="1">Binds 23S rRNA and is also seen to make contacts with the A and possibly P site tRNAs.</text>
</comment>
<comment type="subunit">
    <text evidence="1">Part of the 50S ribosomal subunit.</text>
</comment>
<comment type="similarity">
    <text evidence="1">Belongs to the universal ribosomal protein uL16 family.</text>
</comment>
<protein>
    <recommendedName>
        <fullName evidence="1">Large ribosomal subunit protein uL16</fullName>
    </recommendedName>
    <alternativeName>
        <fullName evidence="2">50S ribosomal protein L16</fullName>
    </alternativeName>
</protein>
<sequence length="137" mass="15501">MMQPKRTKFRKQFKGRIHGNSKGGTDLNFGAFGLKALEPERVTARQIEAARRAITRHMKRAGRVWIRIFPDLPVTSKPTEVRMGKGKGSVDYWACRVAPGRVMFELDGVPEDVAREALRLGAAKLPIKTRFIQRIAE</sequence>